<gene>
    <name evidence="6" type="primary">NUDT2</name>
    <name type="synonym">NUDX2</name>
    <name evidence="8" type="ordered locus">At5g47650</name>
    <name evidence="9" type="ORF">MNJ7.24</name>
</gene>
<reference key="1">
    <citation type="submission" date="1999-04" db="EMBL/GenBank/DDBJ databases">
        <title>Structural analysis of Arabidopsis thaliana chromosome 5. XI.</title>
        <authorList>
            <person name="Kaneko T."/>
            <person name="Katoh T."/>
            <person name="Asamizu E."/>
            <person name="Sato S."/>
            <person name="Nakamura Y."/>
            <person name="Kotani H."/>
            <person name="Tabata S."/>
        </authorList>
    </citation>
    <scope>NUCLEOTIDE SEQUENCE [LARGE SCALE GENOMIC DNA]</scope>
    <source>
        <strain>cv. Columbia</strain>
    </source>
</reference>
<reference key="2">
    <citation type="journal article" date="2017" name="Plant J.">
        <title>Araport11: a complete reannotation of the Arabidopsis thaliana reference genome.</title>
        <authorList>
            <person name="Cheng C.Y."/>
            <person name="Krishnakumar V."/>
            <person name="Chan A.P."/>
            <person name="Thibaud-Nissen F."/>
            <person name="Schobel S."/>
            <person name="Town C.D."/>
        </authorList>
    </citation>
    <scope>GENOME REANNOTATION</scope>
    <source>
        <strain>cv. Columbia</strain>
    </source>
</reference>
<reference key="3">
    <citation type="journal article" date="2003" name="Science">
        <title>Empirical analysis of transcriptional activity in the Arabidopsis genome.</title>
        <authorList>
            <person name="Yamada K."/>
            <person name="Lim J."/>
            <person name="Dale J.M."/>
            <person name="Chen H."/>
            <person name="Shinn P."/>
            <person name="Palm C.J."/>
            <person name="Southwick A.M."/>
            <person name="Wu H.C."/>
            <person name="Kim C.J."/>
            <person name="Nguyen M."/>
            <person name="Pham P.K."/>
            <person name="Cheuk R.F."/>
            <person name="Karlin-Newmann G."/>
            <person name="Liu S.X."/>
            <person name="Lam B."/>
            <person name="Sakano H."/>
            <person name="Wu T."/>
            <person name="Yu G."/>
            <person name="Miranda M."/>
            <person name="Quach H.L."/>
            <person name="Tripp M."/>
            <person name="Chang C.H."/>
            <person name="Lee J.M."/>
            <person name="Toriumi M.J."/>
            <person name="Chan M.M."/>
            <person name="Tang C.C."/>
            <person name="Onodera C.S."/>
            <person name="Deng J.M."/>
            <person name="Akiyama K."/>
            <person name="Ansari Y."/>
            <person name="Arakawa T."/>
            <person name="Banh J."/>
            <person name="Banno F."/>
            <person name="Bowser L."/>
            <person name="Brooks S.Y."/>
            <person name="Carninci P."/>
            <person name="Chao Q."/>
            <person name="Choy N."/>
            <person name="Enju A."/>
            <person name="Goldsmith A.D."/>
            <person name="Gurjal M."/>
            <person name="Hansen N.F."/>
            <person name="Hayashizaki Y."/>
            <person name="Johnson-Hopson C."/>
            <person name="Hsuan V.W."/>
            <person name="Iida K."/>
            <person name="Karnes M."/>
            <person name="Khan S."/>
            <person name="Koesema E."/>
            <person name="Ishida J."/>
            <person name="Jiang P.X."/>
            <person name="Jones T."/>
            <person name="Kawai J."/>
            <person name="Kamiya A."/>
            <person name="Meyers C."/>
            <person name="Nakajima M."/>
            <person name="Narusaka M."/>
            <person name="Seki M."/>
            <person name="Sakurai T."/>
            <person name="Satou M."/>
            <person name="Tamse R."/>
            <person name="Vaysberg M."/>
            <person name="Wallender E.K."/>
            <person name="Wong C."/>
            <person name="Yamamura Y."/>
            <person name="Yuan S."/>
            <person name="Shinozaki K."/>
            <person name="Davis R.W."/>
            <person name="Theologis A."/>
            <person name="Ecker J.R."/>
        </authorList>
    </citation>
    <scope>NUCLEOTIDE SEQUENCE [LARGE SCALE MRNA]</scope>
    <source>
        <strain>cv. Columbia</strain>
    </source>
</reference>
<reference key="4">
    <citation type="journal article" date="2005" name="J. Biol. Chem.">
        <title>Comprehensive analysis of cytosolic nudix hydrolases in Arabidopsis thaliana.</title>
        <authorList>
            <person name="Ogawa T."/>
            <person name="Ueda Y."/>
            <person name="Yoshimura K."/>
            <person name="Shigeoka S."/>
        </authorList>
    </citation>
    <scope>FUNCTION IN VITRO</scope>
    <scope>BIOPHYSICOCHEMICAL PROPERTIES</scope>
    <scope>CATALYTIC ACTIVITY</scope>
    <scope>TISSUE SPECIFICITY</scope>
    <source>
        <strain>cv. Columbia</strain>
    </source>
</reference>
<reference key="5">
    <citation type="journal article" date="2009" name="Plant J.">
        <title>Overexpression of an ADP-ribose pyrophosphatase, AtNUDX2, confers enhanced tolerance to oxidative stress in Arabidopsis plants.</title>
        <authorList>
            <person name="Ogawa T."/>
            <person name="Ishikawa K."/>
            <person name="Harada K."/>
            <person name="Fukusaki E."/>
            <person name="Yoshimura K."/>
            <person name="Shigeoka S."/>
        </authorList>
    </citation>
    <scope>FUNCTION</scope>
    <scope>INDUCTION</scope>
    <source>
        <strain>cv. Columbia</strain>
    </source>
</reference>
<organism>
    <name type="scientific">Arabidopsis thaliana</name>
    <name type="common">Mouse-ear cress</name>
    <dbReference type="NCBI Taxonomy" id="3702"/>
    <lineage>
        <taxon>Eukaryota</taxon>
        <taxon>Viridiplantae</taxon>
        <taxon>Streptophyta</taxon>
        <taxon>Embryophyta</taxon>
        <taxon>Tracheophyta</taxon>
        <taxon>Spermatophyta</taxon>
        <taxon>Magnoliopsida</taxon>
        <taxon>eudicotyledons</taxon>
        <taxon>Gunneridae</taxon>
        <taxon>Pentapetalae</taxon>
        <taxon>rosids</taxon>
        <taxon>malvids</taxon>
        <taxon>Brassicales</taxon>
        <taxon>Brassicaceae</taxon>
        <taxon>Camelineae</taxon>
        <taxon>Arabidopsis</taxon>
    </lineage>
</organism>
<feature type="chain" id="PRO_0000057122" description="Nudix hydrolase 2">
    <location>
        <begin position="1"/>
        <end position="278"/>
    </location>
</feature>
<feature type="domain" description="Nudix hydrolase" evidence="3">
    <location>
        <begin position="110"/>
        <end position="242"/>
    </location>
</feature>
<feature type="short sequence motif" description="Nudix box" evidence="7">
    <location>
        <begin position="147"/>
        <end position="168"/>
    </location>
</feature>
<feature type="active site" description="Proton acceptor" evidence="1">
    <location>
        <position position="165"/>
    </location>
</feature>
<feature type="binding site" evidence="1">
    <location>
        <position position="162"/>
    </location>
    <ligand>
        <name>Mg(2+)</name>
        <dbReference type="ChEBI" id="CHEBI:18420"/>
    </ligand>
</feature>
<feature type="binding site" evidence="1">
    <location>
        <position position="166"/>
    </location>
    <ligand>
        <name>Mg(2+)</name>
        <dbReference type="ChEBI" id="CHEBI:18420"/>
    </ligand>
</feature>
<feature type="sequence conflict" description="In Ref. 1; BAB09091." evidence="7" ref="1">
    <original>E</original>
    <variation>EK</variation>
    <location>
        <position position="125"/>
    </location>
</feature>
<sequence>MSASSSSTNPMSREDATTLLPSVQDKYGGVMTEMTHPMDPSLFSTLLRSSLSTWTLQGKKGVWIKLPKQLIGLAETAVKEGFWFHHAEKDYLMLVYWIPKEDDTLPANASHRVGIGAFVINHNKEVLVVQEKTGRFQGQGIWKFPTGVVNEGEDIHDGSVREVKEETGVDTEFDQILAFRQTHKAFFGKSDLFFVCMLKPLSLEINAQESEIEAAQWMPWEEYINQPFVQNYELLRYMTDICSAKTNGDYEGFTPLRVSAPDQQGNLYYNTRDLHSRN</sequence>
<dbReference type="EC" id="3.6.1.-" evidence="4"/>
<dbReference type="EC" id="3.6.1.13" evidence="4"/>
<dbReference type="EC" id="3.6.1.22" evidence="4"/>
<dbReference type="EMBL" id="AB025628">
    <property type="protein sequence ID" value="BAB09091.1"/>
    <property type="status" value="ALT_INIT"/>
    <property type="molecule type" value="Genomic_DNA"/>
</dbReference>
<dbReference type="EMBL" id="CP002688">
    <property type="protein sequence ID" value="AED95546.1"/>
    <property type="molecule type" value="Genomic_DNA"/>
</dbReference>
<dbReference type="EMBL" id="CP002688">
    <property type="protein sequence ID" value="ANM70008.1"/>
    <property type="molecule type" value="Genomic_DNA"/>
</dbReference>
<dbReference type="EMBL" id="CP002688">
    <property type="protein sequence ID" value="ANM70010.1"/>
    <property type="molecule type" value="Genomic_DNA"/>
</dbReference>
<dbReference type="EMBL" id="AY042806">
    <property type="protein sequence ID" value="AAK68746.1"/>
    <property type="molecule type" value="mRNA"/>
</dbReference>
<dbReference type="EMBL" id="AY064646">
    <property type="protein sequence ID" value="AAL47357.1"/>
    <property type="molecule type" value="mRNA"/>
</dbReference>
<dbReference type="RefSeq" id="NP_001331650.1">
    <property type="nucleotide sequence ID" value="NM_001344739.1"/>
</dbReference>
<dbReference type="RefSeq" id="NP_001331652.1">
    <property type="nucleotide sequence ID" value="NM_001344737.1"/>
</dbReference>
<dbReference type="RefSeq" id="NP_568687.1">
    <property type="nucleotide sequence ID" value="NM_124139.4"/>
</dbReference>
<dbReference type="SMR" id="Q94B74"/>
<dbReference type="BioGRID" id="20064">
    <property type="interactions" value="1"/>
</dbReference>
<dbReference type="FunCoup" id="Q94B74">
    <property type="interactions" value="675"/>
</dbReference>
<dbReference type="STRING" id="3702.Q94B74"/>
<dbReference type="PaxDb" id="3702-AT5G47650.1"/>
<dbReference type="ProteomicsDB" id="248851"/>
<dbReference type="EnsemblPlants" id="AT5G47650.1">
    <property type="protein sequence ID" value="AT5G47650.1"/>
    <property type="gene ID" value="AT5G47650"/>
</dbReference>
<dbReference type="EnsemblPlants" id="AT5G47650.3">
    <property type="protein sequence ID" value="AT5G47650.3"/>
    <property type="gene ID" value="AT5G47650"/>
</dbReference>
<dbReference type="EnsemblPlants" id="AT5G47650.5">
    <property type="protein sequence ID" value="AT5G47650.5"/>
    <property type="gene ID" value="AT5G47650"/>
</dbReference>
<dbReference type="GeneID" id="834816"/>
<dbReference type="Gramene" id="AT5G47650.1">
    <property type="protein sequence ID" value="AT5G47650.1"/>
    <property type="gene ID" value="AT5G47650"/>
</dbReference>
<dbReference type="Gramene" id="AT5G47650.3">
    <property type="protein sequence ID" value="AT5G47650.3"/>
    <property type="gene ID" value="AT5G47650"/>
</dbReference>
<dbReference type="Gramene" id="AT5G47650.5">
    <property type="protein sequence ID" value="AT5G47650.5"/>
    <property type="gene ID" value="AT5G47650"/>
</dbReference>
<dbReference type="KEGG" id="ath:AT5G47650"/>
<dbReference type="Araport" id="AT5G47650"/>
<dbReference type="TAIR" id="AT5G47650">
    <property type="gene designation" value="NUDT2"/>
</dbReference>
<dbReference type="eggNOG" id="KOG0648">
    <property type="taxonomic scope" value="Eukaryota"/>
</dbReference>
<dbReference type="HOGENOM" id="CLU_054299_1_0_1"/>
<dbReference type="InParanoid" id="Q94B74"/>
<dbReference type="PhylomeDB" id="Q94B74"/>
<dbReference type="BioCyc" id="ARA:AT5G47650-MONOMER"/>
<dbReference type="BRENDA" id="3.6.1.13">
    <property type="organism ID" value="399"/>
</dbReference>
<dbReference type="SABIO-RK" id="Q94B74"/>
<dbReference type="PRO" id="PR:Q94B74"/>
<dbReference type="Proteomes" id="UP000006548">
    <property type="component" value="Chromosome 5"/>
</dbReference>
<dbReference type="ExpressionAtlas" id="Q94B74">
    <property type="expression patterns" value="baseline and differential"/>
</dbReference>
<dbReference type="GO" id="GO:0005829">
    <property type="term" value="C:cytosol"/>
    <property type="evidence" value="ECO:0000255"/>
    <property type="project" value="TAIR"/>
</dbReference>
<dbReference type="GO" id="GO:0047631">
    <property type="term" value="F:ADP-ribose diphosphatase activity"/>
    <property type="evidence" value="ECO:0000314"/>
    <property type="project" value="TAIR"/>
</dbReference>
<dbReference type="GO" id="GO:0046872">
    <property type="term" value="F:metal ion binding"/>
    <property type="evidence" value="ECO:0007669"/>
    <property type="project" value="UniProtKB-KW"/>
</dbReference>
<dbReference type="GO" id="GO:0051287">
    <property type="term" value="F:NAD binding"/>
    <property type="evidence" value="ECO:0000314"/>
    <property type="project" value="TAIR"/>
</dbReference>
<dbReference type="GO" id="GO:0000210">
    <property type="term" value="F:NAD+ diphosphatase activity"/>
    <property type="evidence" value="ECO:0007669"/>
    <property type="project" value="RHEA"/>
</dbReference>
<dbReference type="GO" id="GO:0035529">
    <property type="term" value="F:NADH pyrophosphatase activity"/>
    <property type="evidence" value="ECO:0007669"/>
    <property type="project" value="RHEA"/>
</dbReference>
<dbReference type="GO" id="GO:0006979">
    <property type="term" value="P:response to oxidative stress"/>
    <property type="evidence" value="ECO:0000315"/>
    <property type="project" value="TAIR"/>
</dbReference>
<dbReference type="CDD" id="cd04670">
    <property type="entry name" value="NUDIX_ASFGF2_Nudt6"/>
    <property type="match status" value="1"/>
</dbReference>
<dbReference type="FunFam" id="3.40.630.30:FF:000016">
    <property type="entry name" value="nudix hydrolase 2"/>
    <property type="match status" value="1"/>
</dbReference>
<dbReference type="FunFam" id="3.90.79.10:FF:000015">
    <property type="entry name" value="Nudix hydrolase 8"/>
    <property type="match status" value="1"/>
</dbReference>
<dbReference type="Gene3D" id="3.40.630.30">
    <property type="match status" value="1"/>
</dbReference>
<dbReference type="Gene3D" id="3.90.79.10">
    <property type="entry name" value="Nucleoside Triphosphate Pyrophosphohydrolase"/>
    <property type="match status" value="1"/>
</dbReference>
<dbReference type="InterPro" id="IPR015797">
    <property type="entry name" value="NUDIX_hydrolase-like_dom_sf"/>
</dbReference>
<dbReference type="InterPro" id="IPR003293">
    <property type="entry name" value="Nudix_hydrolase6-like"/>
</dbReference>
<dbReference type="InterPro" id="IPR000086">
    <property type="entry name" value="NUDIX_hydrolase_dom"/>
</dbReference>
<dbReference type="InterPro" id="IPR040618">
    <property type="entry name" value="Pre-Nudix"/>
</dbReference>
<dbReference type="PANTHER" id="PTHR13994:SF29">
    <property type="entry name" value="NUDIX HYDROLASE 2"/>
    <property type="match status" value="1"/>
</dbReference>
<dbReference type="PANTHER" id="PTHR13994">
    <property type="entry name" value="NUDIX HYDROLASE RELATED"/>
    <property type="match status" value="1"/>
</dbReference>
<dbReference type="Pfam" id="PF00293">
    <property type="entry name" value="NUDIX"/>
    <property type="match status" value="1"/>
</dbReference>
<dbReference type="Pfam" id="PF18290">
    <property type="entry name" value="Nudix_hydro"/>
    <property type="match status" value="1"/>
</dbReference>
<dbReference type="PRINTS" id="PR01356">
    <property type="entry name" value="GFGPROTEIN"/>
</dbReference>
<dbReference type="SUPFAM" id="SSF55811">
    <property type="entry name" value="Nudix"/>
    <property type="match status" value="1"/>
</dbReference>
<dbReference type="PROSITE" id="PS51462">
    <property type="entry name" value="NUDIX"/>
    <property type="match status" value="1"/>
</dbReference>
<comment type="function">
    <text evidence="4 5">Probably mediates the hydrolysis of some nucleoside diphosphate derivatives. In vitro, it can use both NADH and ADP-ribose as substrates; however the relevance of such substrates in vivo is unclear. Confers tolerance to oxidative stress (PubMed:18798872).</text>
</comment>
<comment type="catalytic activity">
    <reaction evidence="4">
        <text>ADP-D-ribose + H2O = D-ribose 5-phosphate + AMP + 2 H(+)</text>
        <dbReference type="Rhea" id="RHEA:10412"/>
        <dbReference type="ChEBI" id="CHEBI:15377"/>
        <dbReference type="ChEBI" id="CHEBI:15378"/>
        <dbReference type="ChEBI" id="CHEBI:57967"/>
        <dbReference type="ChEBI" id="CHEBI:78346"/>
        <dbReference type="ChEBI" id="CHEBI:456215"/>
        <dbReference type="EC" id="3.6.1.13"/>
    </reaction>
</comment>
<comment type="catalytic activity">
    <reaction evidence="4">
        <text>NAD(+) + H2O = beta-nicotinamide D-ribonucleotide + AMP + 2 H(+)</text>
        <dbReference type="Rhea" id="RHEA:11800"/>
        <dbReference type="ChEBI" id="CHEBI:14649"/>
        <dbReference type="ChEBI" id="CHEBI:15377"/>
        <dbReference type="ChEBI" id="CHEBI:15378"/>
        <dbReference type="ChEBI" id="CHEBI:57540"/>
        <dbReference type="ChEBI" id="CHEBI:456215"/>
        <dbReference type="EC" id="3.6.1.22"/>
    </reaction>
</comment>
<comment type="catalytic activity">
    <reaction evidence="4">
        <text>NADH + H2O = reduced beta-nicotinamide D-ribonucleotide + AMP + 2 H(+)</text>
        <dbReference type="Rhea" id="RHEA:48868"/>
        <dbReference type="ChEBI" id="CHEBI:15377"/>
        <dbReference type="ChEBI" id="CHEBI:15378"/>
        <dbReference type="ChEBI" id="CHEBI:57945"/>
        <dbReference type="ChEBI" id="CHEBI:90832"/>
        <dbReference type="ChEBI" id="CHEBI:456215"/>
        <dbReference type="EC" id="3.6.1.22"/>
    </reaction>
</comment>
<comment type="cofactor">
    <cofactor evidence="2">
        <name>Mg(2+)</name>
        <dbReference type="ChEBI" id="CHEBI:18420"/>
    </cofactor>
    <cofactor evidence="2">
        <name>Mn(2+)</name>
        <dbReference type="ChEBI" id="CHEBI:29035"/>
    </cofactor>
</comment>
<comment type="biophysicochemical properties">
    <kinetics>
        <KM evidence="4">16.9 uM for ADP-ribose (at pH 8 and 37 degrees Celsius)</KM>
        <KM evidence="4">22.3 uM for NADH (at pH 8 and 37 degrees Celsius)</KM>
        <Vmax evidence="4">0.2 umol/min/mg enzyme with ADP-ribose as substrate (at pH 8 and 37 degrees Celsius)</Vmax>
        <Vmax evidence="4">0.16 umol/min/mg enzyme with NADH as substrate (at pH 8 and 37 degrees Celsius)</Vmax>
        <text evidence="4">kcat is 0.12 sec(-1) with ADP-ribose as substrate (at pH 8 and 37 degrees Celsius) (PubMed:15878881). kcat is 0.01 sec(-1) with NADH as substrate (at pH 8 and 37 degrees Celsius) (PubMed:15878881).</text>
    </kinetics>
</comment>
<comment type="tissue specificity">
    <text evidence="4">Expressed in roots, stems and leaves.</text>
</comment>
<comment type="induction">
    <text evidence="5">By paraquat, drought and high salinity.</text>
</comment>
<comment type="miscellaneous">
    <text evidence="5">Overexpression of NUTD2 confers enhanced tolerance to oxidative stress.</text>
</comment>
<comment type="similarity">
    <text evidence="7">Belongs to the Nudix hydrolase family.</text>
</comment>
<comment type="sequence caution" evidence="7">
    <conflict type="erroneous initiation">
        <sequence resource="EMBL-CDS" id="BAB09091"/>
    </conflict>
    <text>Truncated N-terminus.</text>
</comment>
<proteinExistence type="evidence at protein level"/>
<protein>
    <recommendedName>
        <fullName evidence="6">Nudix hydrolase 2</fullName>
        <shortName evidence="6">AtNUDT2</shortName>
        <ecNumber evidence="4">3.6.1.-</ecNumber>
    </recommendedName>
    <alternativeName>
        <fullName evidence="6">ADP-ribose pyrophosphatase</fullName>
        <ecNumber evidence="4">3.6.1.13</ecNumber>
    </alternativeName>
    <alternativeName>
        <fullName evidence="6">NADH pyrophosphatase</fullName>
        <ecNumber evidence="4">3.6.1.22</ecNumber>
    </alternativeName>
</protein>
<evidence type="ECO:0000250" key="1">
    <source>
        <dbReference type="UniProtKB" id="O95989"/>
    </source>
</evidence>
<evidence type="ECO:0000250" key="2">
    <source>
        <dbReference type="UniProtKB" id="Q8IU60"/>
    </source>
</evidence>
<evidence type="ECO:0000255" key="3">
    <source>
        <dbReference type="PROSITE-ProRule" id="PRU00794"/>
    </source>
</evidence>
<evidence type="ECO:0000269" key="4">
    <source>
    </source>
</evidence>
<evidence type="ECO:0000269" key="5">
    <source>
    </source>
</evidence>
<evidence type="ECO:0000303" key="6">
    <source>
    </source>
</evidence>
<evidence type="ECO:0000305" key="7"/>
<evidence type="ECO:0000312" key="8">
    <source>
        <dbReference type="Araport" id="AT5G47650"/>
    </source>
</evidence>
<evidence type="ECO:0000312" key="9">
    <source>
        <dbReference type="EMBL" id="BAB09091.1"/>
    </source>
</evidence>
<accession>Q94B74</accession>
<accession>Q9FGJ2</accession>
<name>NUDT2_ARATH</name>
<keyword id="KW-0378">Hydrolase</keyword>
<keyword id="KW-0460">Magnesium</keyword>
<keyword id="KW-0464">Manganese</keyword>
<keyword id="KW-0479">Metal-binding</keyword>
<keyword id="KW-0520">NAD</keyword>
<keyword id="KW-1185">Reference proteome</keyword>